<comment type="function">
    <text evidence="1">One of the primary rRNA binding proteins, it binds directly to 16S rRNA where it helps nucleate assembly of the platform of the 30S subunit by binding and bridging several RNA helices of the 16S rRNA.</text>
</comment>
<comment type="function">
    <text evidence="1">Forms an intersubunit bridge (bridge B4) with the 23S rRNA of the 50S subunit in the ribosome.</text>
</comment>
<comment type="subunit">
    <text evidence="1">Part of the 30S ribosomal subunit. Forms a bridge to the 50S subunit in the 70S ribosome, contacting the 23S rRNA.</text>
</comment>
<comment type="similarity">
    <text evidence="1">Belongs to the universal ribosomal protein uS15 family.</text>
</comment>
<gene>
    <name evidence="1" type="primary">rpsO</name>
    <name type="ordered locus">LL1886</name>
    <name type="ORF">L0392</name>
</gene>
<feature type="chain" id="PRO_0000115457" description="Small ribosomal subunit protein uS15">
    <location>
        <begin position="1"/>
        <end position="89"/>
    </location>
</feature>
<keyword id="KW-1185">Reference proteome</keyword>
<keyword id="KW-0687">Ribonucleoprotein</keyword>
<keyword id="KW-0689">Ribosomal protein</keyword>
<keyword id="KW-0694">RNA-binding</keyword>
<keyword id="KW-0699">rRNA-binding</keyword>
<name>RS15_LACLA</name>
<proteinExistence type="inferred from homology"/>
<evidence type="ECO:0000255" key="1">
    <source>
        <dbReference type="HAMAP-Rule" id="MF_01343"/>
    </source>
</evidence>
<evidence type="ECO:0000305" key="2"/>
<reference key="1">
    <citation type="journal article" date="2001" name="Genome Res.">
        <title>The complete genome sequence of the lactic acid bacterium Lactococcus lactis ssp. lactis IL1403.</title>
        <authorList>
            <person name="Bolotin A."/>
            <person name="Wincker P."/>
            <person name="Mauger S."/>
            <person name="Jaillon O."/>
            <person name="Malarme K."/>
            <person name="Weissenbach J."/>
            <person name="Ehrlich S.D."/>
            <person name="Sorokin A."/>
        </authorList>
    </citation>
    <scope>NUCLEOTIDE SEQUENCE [LARGE SCALE GENOMIC DNA]</scope>
    <source>
        <strain>IL1403</strain>
    </source>
</reference>
<organism>
    <name type="scientific">Lactococcus lactis subsp. lactis (strain IL1403)</name>
    <name type="common">Streptococcus lactis</name>
    <dbReference type="NCBI Taxonomy" id="272623"/>
    <lineage>
        <taxon>Bacteria</taxon>
        <taxon>Bacillati</taxon>
        <taxon>Bacillota</taxon>
        <taxon>Bacilli</taxon>
        <taxon>Lactobacillales</taxon>
        <taxon>Streptococcaceae</taxon>
        <taxon>Lactococcus</taxon>
    </lineage>
</organism>
<accession>Q9CEF6</accession>
<sequence length="89" mass="10343">MAISKEKKQEIIAQYARKEGDTGSPEVQIAVLTWEINHLNDHIKSHKKDHATQRGLMKKIGHRRNLLGYLRGKDVQRYRELIASLGLRR</sequence>
<protein>
    <recommendedName>
        <fullName evidence="1">Small ribosomal subunit protein uS15</fullName>
    </recommendedName>
    <alternativeName>
        <fullName evidence="2">30S ribosomal protein S15</fullName>
    </alternativeName>
</protein>
<dbReference type="EMBL" id="AE005176">
    <property type="protein sequence ID" value="AAK05984.1"/>
    <property type="molecule type" value="Genomic_DNA"/>
</dbReference>
<dbReference type="PIR" id="F86860">
    <property type="entry name" value="F86860"/>
</dbReference>
<dbReference type="RefSeq" id="NP_268043.1">
    <property type="nucleotide sequence ID" value="NC_002662.1"/>
</dbReference>
<dbReference type="RefSeq" id="WP_010906184.1">
    <property type="nucleotide sequence ID" value="NC_002662.1"/>
</dbReference>
<dbReference type="SMR" id="Q9CEF6"/>
<dbReference type="PaxDb" id="272623-L0392"/>
<dbReference type="EnsemblBacteria" id="AAK05984">
    <property type="protein sequence ID" value="AAK05984"/>
    <property type="gene ID" value="L0392"/>
</dbReference>
<dbReference type="GeneID" id="61110216"/>
<dbReference type="KEGG" id="lla:L0392"/>
<dbReference type="PATRIC" id="fig|272623.7.peg.2020"/>
<dbReference type="eggNOG" id="COG0184">
    <property type="taxonomic scope" value="Bacteria"/>
</dbReference>
<dbReference type="HOGENOM" id="CLU_148518_0_0_9"/>
<dbReference type="OrthoDB" id="9799262at2"/>
<dbReference type="Proteomes" id="UP000002196">
    <property type="component" value="Chromosome"/>
</dbReference>
<dbReference type="GO" id="GO:0022627">
    <property type="term" value="C:cytosolic small ribosomal subunit"/>
    <property type="evidence" value="ECO:0007669"/>
    <property type="project" value="TreeGrafter"/>
</dbReference>
<dbReference type="GO" id="GO:0019843">
    <property type="term" value="F:rRNA binding"/>
    <property type="evidence" value="ECO:0007669"/>
    <property type="project" value="UniProtKB-UniRule"/>
</dbReference>
<dbReference type="GO" id="GO:0003735">
    <property type="term" value="F:structural constituent of ribosome"/>
    <property type="evidence" value="ECO:0007669"/>
    <property type="project" value="InterPro"/>
</dbReference>
<dbReference type="GO" id="GO:0006412">
    <property type="term" value="P:translation"/>
    <property type="evidence" value="ECO:0007669"/>
    <property type="project" value="UniProtKB-UniRule"/>
</dbReference>
<dbReference type="CDD" id="cd00353">
    <property type="entry name" value="Ribosomal_S15p_S13e"/>
    <property type="match status" value="1"/>
</dbReference>
<dbReference type="FunFam" id="1.10.287.10:FF:000002">
    <property type="entry name" value="30S ribosomal protein S15"/>
    <property type="match status" value="1"/>
</dbReference>
<dbReference type="Gene3D" id="6.10.250.3130">
    <property type="match status" value="1"/>
</dbReference>
<dbReference type="Gene3D" id="1.10.287.10">
    <property type="entry name" value="S15/NS1, RNA-binding"/>
    <property type="match status" value="1"/>
</dbReference>
<dbReference type="HAMAP" id="MF_01343_B">
    <property type="entry name" value="Ribosomal_uS15_B"/>
    <property type="match status" value="1"/>
</dbReference>
<dbReference type="InterPro" id="IPR000589">
    <property type="entry name" value="Ribosomal_uS15"/>
</dbReference>
<dbReference type="InterPro" id="IPR005290">
    <property type="entry name" value="Ribosomal_uS15_bac-type"/>
</dbReference>
<dbReference type="InterPro" id="IPR009068">
    <property type="entry name" value="uS15_NS1_RNA-bd_sf"/>
</dbReference>
<dbReference type="NCBIfam" id="TIGR00952">
    <property type="entry name" value="S15_bact"/>
    <property type="match status" value="1"/>
</dbReference>
<dbReference type="PANTHER" id="PTHR23321">
    <property type="entry name" value="RIBOSOMAL PROTEIN S15, BACTERIAL AND ORGANELLAR"/>
    <property type="match status" value="1"/>
</dbReference>
<dbReference type="PANTHER" id="PTHR23321:SF26">
    <property type="entry name" value="SMALL RIBOSOMAL SUBUNIT PROTEIN US15M"/>
    <property type="match status" value="1"/>
</dbReference>
<dbReference type="Pfam" id="PF00312">
    <property type="entry name" value="Ribosomal_S15"/>
    <property type="match status" value="1"/>
</dbReference>
<dbReference type="SMART" id="SM01387">
    <property type="entry name" value="Ribosomal_S15"/>
    <property type="match status" value="1"/>
</dbReference>
<dbReference type="SUPFAM" id="SSF47060">
    <property type="entry name" value="S15/NS1 RNA-binding domain"/>
    <property type="match status" value="1"/>
</dbReference>
<dbReference type="PROSITE" id="PS00362">
    <property type="entry name" value="RIBOSOMAL_S15"/>
    <property type="match status" value="1"/>
</dbReference>